<dbReference type="EMBL" id="Z97369">
    <property type="protein sequence ID" value="CAB10628.1"/>
    <property type="molecule type" value="Genomic_DNA"/>
</dbReference>
<dbReference type="EMBL" id="AL583922">
    <property type="protein sequence ID" value="CAC30567.1"/>
    <property type="molecule type" value="Genomic_DNA"/>
</dbReference>
<dbReference type="PIR" id="B87111">
    <property type="entry name" value="B87111"/>
</dbReference>
<dbReference type="RefSeq" id="NP_302114.1">
    <property type="nucleotide sequence ID" value="NC_002677.1"/>
</dbReference>
<dbReference type="SMR" id="O33016"/>
<dbReference type="STRING" id="272631.gene:17575457"/>
<dbReference type="KEGG" id="mle:ML1616"/>
<dbReference type="PATRIC" id="fig|272631.5.peg.3042"/>
<dbReference type="Leproma" id="ML1616"/>
<dbReference type="eggNOG" id="COG0806">
    <property type="taxonomic scope" value="Bacteria"/>
</dbReference>
<dbReference type="HOGENOM" id="CLU_077636_0_0_11"/>
<dbReference type="OrthoDB" id="5381335at2"/>
<dbReference type="Proteomes" id="UP000000806">
    <property type="component" value="Chromosome"/>
</dbReference>
<dbReference type="GO" id="GO:0005737">
    <property type="term" value="C:cytoplasm"/>
    <property type="evidence" value="ECO:0007669"/>
    <property type="project" value="UniProtKB-SubCell"/>
</dbReference>
<dbReference type="GO" id="GO:0005840">
    <property type="term" value="C:ribosome"/>
    <property type="evidence" value="ECO:0007669"/>
    <property type="project" value="InterPro"/>
</dbReference>
<dbReference type="GO" id="GO:0043022">
    <property type="term" value="F:ribosome binding"/>
    <property type="evidence" value="ECO:0007669"/>
    <property type="project" value="InterPro"/>
</dbReference>
<dbReference type="GO" id="GO:0042274">
    <property type="term" value="P:ribosomal small subunit biogenesis"/>
    <property type="evidence" value="ECO:0007669"/>
    <property type="project" value="UniProtKB-UniRule"/>
</dbReference>
<dbReference type="GO" id="GO:0006364">
    <property type="term" value="P:rRNA processing"/>
    <property type="evidence" value="ECO:0007669"/>
    <property type="project" value="UniProtKB-UniRule"/>
</dbReference>
<dbReference type="Gene3D" id="2.30.30.240">
    <property type="entry name" value="PRC-barrel domain"/>
    <property type="match status" value="1"/>
</dbReference>
<dbReference type="Gene3D" id="2.40.30.60">
    <property type="entry name" value="RimM"/>
    <property type="match status" value="1"/>
</dbReference>
<dbReference type="HAMAP" id="MF_00014">
    <property type="entry name" value="Ribosome_mat_RimM"/>
    <property type="match status" value="1"/>
</dbReference>
<dbReference type="InterPro" id="IPR027275">
    <property type="entry name" value="PRC-brl_dom"/>
</dbReference>
<dbReference type="InterPro" id="IPR011033">
    <property type="entry name" value="PRC_barrel-like_sf"/>
</dbReference>
<dbReference type="InterPro" id="IPR011961">
    <property type="entry name" value="RimM"/>
</dbReference>
<dbReference type="InterPro" id="IPR002676">
    <property type="entry name" value="RimM_N"/>
</dbReference>
<dbReference type="InterPro" id="IPR036976">
    <property type="entry name" value="RimM_N_sf"/>
</dbReference>
<dbReference type="InterPro" id="IPR009000">
    <property type="entry name" value="Transl_B-barrel_sf"/>
</dbReference>
<dbReference type="NCBIfam" id="TIGR02273">
    <property type="entry name" value="16S_RimM"/>
    <property type="match status" value="1"/>
</dbReference>
<dbReference type="PANTHER" id="PTHR33692">
    <property type="entry name" value="RIBOSOME MATURATION FACTOR RIMM"/>
    <property type="match status" value="1"/>
</dbReference>
<dbReference type="PANTHER" id="PTHR33692:SF1">
    <property type="entry name" value="RIBOSOME MATURATION FACTOR RIMM"/>
    <property type="match status" value="1"/>
</dbReference>
<dbReference type="Pfam" id="PF05239">
    <property type="entry name" value="PRC"/>
    <property type="match status" value="1"/>
</dbReference>
<dbReference type="Pfam" id="PF01782">
    <property type="entry name" value="RimM"/>
    <property type="match status" value="1"/>
</dbReference>
<dbReference type="SUPFAM" id="SSF50346">
    <property type="entry name" value="PRC-barrel domain"/>
    <property type="match status" value="1"/>
</dbReference>
<dbReference type="SUPFAM" id="SSF50447">
    <property type="entry name" value="Translation proteins"/>
    <property type="match status" value="1"/>
</dbReference>
<accession>O33016</accession>
<protein>
    <recommendedName>
        <fullName evidence="1">Ribosome maturation factor RimM</fullName>
    </recommendedName>
</protein>
<evidence type="ECO:0000255" key="1">
    <source>
        <dbReference type="HAMAP-Rule" id="MF_00014"/>
    </source>
</evidence>
<reference key="1">
    <citation type="journal article" date="2001" name="Nature">
        <title>Massive gene decay in the leprosy bacillus.</title>
        <authorList>
            <person name="Cole S.T."/>
            <person name="Eiglmeier K."/>
            <person name="Parkhill J."/>
            <person name="James K.D."/>
            <person name="Thomson N.R."/>
            <person name="Wheeler P.R."/>
            <person name="Honore N."/>
            <person name="Garnier T."/>
            <person name="Churcher C.M."/>
            <person name="Harris D.E."/>
            <person name="Mungall K.L."/>
            <person name="Basham D."/>
            <person name="Brown D."/>
            <person name="Chillingworth T."/>
            <person name="Connor R."/>
            <person name="Davies R.M."/>
            <person name="Devlin K."/>
            <person name="Duthoy S."/>
            <person name="Feltwell T."/>
            <person name="Fraser A."/>
            <person name="Hamlin N."/>
            <person name="Holroyd S."/>
            <person name="Hornsby T."/>
            <person name="Jagels K."/>
            <person name="Lacroix C."/>
            <person name="Maclean J."/>
            <person name="Moule S."/>
            <person name="Murphy L.D."/>
            <person name="Oliver K."/>
            <person name="Quail M.A."/>
            <person name="Rajandream M.A."/>
            <person name="Rutherford K.M."/>
            <person name="Rutter S."/>
            <person name="Seeger K."/>
            <person name="Simon S."/>
            <person name="Simmonds M."/>
            <person name="Skelton J."/>
            <person name="Squares R."/>
            <person name="Squares S."/>
            <person name="Stevens K."/>
            <person name="Taylor K."/>
            <person name="Whitehead S."/>
            <person name="Woodward J.R."/>
            <person name="Barrell B.G."/>
        </authorList>
    </citation>
    <scope>NUCLEOTIDE SEQUENCE [LARGE SCALE GENOMIC DNA]</scope>
    <source>
        <strain>TN</strain>
    </source>
</reference>
<feature type="chain" id="PRO_0000163318" description="Ribosome maturation factor RimM">
    <location>
        <begin position="1"/>
        <end position="179"/>
    </location>
</feature>
<feature type="domain" description="PRC barrel" evidence="1">
    <location>
        <begin position="104"/>
        <end position="176"/>
    </location>
</feature>
<gene>
    <name evidence="1" type="primary">rimM</name>
    <name type="ordered locus">ML1616</name>
    <name type="ORF">MLCB250.34</name>
</gene>
<comment type="function">
    <text evidence="1">An accessory protein needed during the final step in the assembly of 30S ribosomal subunit, possibly for assembly of the head region. Essential for efficient processing of 16S rRNA. May be needed both before and after RbfA during the maturation of 16S rRNA. It has affinity for free ribosomal 30S subunits but not for 70S ribosomes.</text>
</comment>
<comment type="subunit">
    <text evidence="1">Binds ribosomal protein uS19.</text>
</comment>
<comment type="subcellular location">
    <subcellularLocation>
        <location evidence="1">Cytoplasm</location>
    </subcellularLocation>
</comment>
<comment type="domain">
    <text evidence="1">The PRC barrel domain binds ribosomal protein uS19.</text>
</comment>
<comment type="similarity">
    <text evidence="1">Belongs to the RimM family.</text>
</comment>
<keyword id="KW-0143">Chaperone</keyword>
<keyword id="KW-0963">Cytoplasm</keyword>
<keyword id="KW-1185">Reference proteome</keyword>
<keyword id="KW-0690">Ribosome biogenesis</keyword>
<keyword id="KW-0698">rRNA processing</keyword>
<sequence length="179" mass="19295">MHAHGALLELTIGRVVKAHGIGGEVVVEIRTDDPASRFCPGNILRAKDFPRGGPERRYTVVYAREHGARLLVRLAGVSDRDAADALRGSLFVIDSLDLPPIDEPDTYYDHQLEGLQVRTMMGRDVGVVAEVLHTAAGELLAVRCDSGEVLVPFVGAIVKLVSLDDGIVEIDPPKGLLDL</sequence>
<proteinExistence type="inferred from homology"/>
<organism>
    <name type="scientific">Mycobacterium leprae (strain TN)</name>
    <dbReference type="NCBI Taxonomy" id="272631"/>
    <lineage>
        <taxon>Bacteria</taxon>
        <taxon>Bacillati</taxon>
        <taxon>Actinomycetota</taxon>
        <taxon>Actinomycetes</taxon>
        <taxon>Mycobacteriales</taxon>
        <taxon>Mycobacteriaceae</taxon>
        <taxon>Mycobacterium</taxon>
    </lineage>
</organism>
<name>RIMM_MYCLE</name>